<organism>
    <name type="scientific">Pseudomonas syringae pv. tomato (strain ATCC BAA-871 / DC3000)</name>
    <dbReference type="NCBI Taxonomy" id="223283"/>
    <lineage>
        <taxon>Bacteria</taxon>
        <taxon>Pseudomonadati</taxon>
        <taxon>Pseudomonadota</taxon>
        <taxon>Gammaproteobacteria</taxon>
        <taxon>Pseudomonadales</taxon>
        <taxon>Pseudomonadaceae</taxon>
        <taxon>Pseudomonas</taxon>
    </lineage>
</organism>
<accession>Q886M7</accession>
<evidence type="ECO:0000255" key="1">
    <source>
        <dbReference type="HAMAP-Rule" id="MF_00823"/>
    </source>
</evidence>
<evidence type="ECO:0000255" key="2">
    <source>
        <dbReference type="PROSITE-ProRule" id="PRU01137"/>
    </source>
</evidence>
<gene>
    <name evidence="1" type="primary">accA</name>
    <name type="ordered locus">PSPTO_1550</name>
</gene>
<feature type="chain" id="PRO_0000223812" description="Acetyl-coenzyme A carboxylase carboxyl transferase subunit alpha">
    <location>
        <begin position="1"/>
        <end position="315"/>
    </location>
</feature>
<feature type="domain" description="CoA carboxyltransferase C-terminal" evidence="2">
    <location>
        <begin position="40"/>
        <end position="293"/>
    </location>
</feature>
<keyword id="KW-0067">ATP-binding</keyword>
<keyword id="KW-0963">Cytoplasm</keyword>
<keyword id="KW-0275">Fatty acid biosynthesis</keyword>
<keyword id="KW-0276">Fatty acid metabolism</keyword>
<keyword id="KW-0444">Lipid biosynthesis</keyword>
<keyword id="KW-0443">Lipid metabolism</keyword>
<keyword id="KW-0547">Nucleotide-binding</keyword>
<keyword id="KW-1185">Reference proteome</keyword>
<keyword id="KW-0808">Transferase</keyword>
<sequence>MNPNFLDFEQPIADLQAKIEELRLVGNDNSLNIGDEISRLQDKSKTLTESIFGNLTSWQIARMARHPRRPYTLDYIENIFTEFDELHGDRHFSDDAAIVGGIARLDNQPVMIIGHQKGREVREKVRRNFGMPRPEGYRKACRLMEMAERFKMPILTFIDTPGAYPGIDAEERNQSEAIAWNLRVMARLKTPIIATVIGEGGSGGALAIGVCDQLNMLQYSTYAVISPEGCASILWKTAEKAPDAAEAMGITADRLKGLGIVDKVIAEPLGGAHRDPVAAAALIREELSSQLAMLKAFDNDALLARRYDRLMSYGL</sequence>
<reference key="1">
    <citation type="journal article" date="2003" name="Proc. Natl. Acad. Sci. U.S.A.">
        <title>The complete genome sequence of the Arabidopsis and tomato pathogen Pseudomonas syringae pv. tomato DC3000.</title>
        <authorList>
            <person name="Buell C.R."/>
            <person name="Joardar V."/>
            <person name="Lindeberg M."/>
            <person name="Selengut J."/>
            <person name="Paulsen I.T."/>
            <person name="Gwinn M.L."/>
            <person name="Dodson R.J."/>
            <person name="DeBoy R.T."/>
            <person name="Durkin A.S."/>
            <person name="Kolonay J.F."/>
            <person name="Madupu R."/>
            <person name="Daugherty S.C."/>
            <person name="Brinkac L.M."/>
            <person name="Beanan M.J."/>
            <person name="Haft D.H."/>
            <person name="Nelson W.C."/>
            <person name="Davidsen T.M."/>
            <person name="Zafar N."/>
            <person name="Zhou L."/>
            <person name="Liu J."/>
            <person name="Yuan Q."/>
            <person name="Khouri H.M."/>
            <person name="Fedorova N.B."/>
            <person name="Tran B."/>
            <person name="Russell D."/>
            <person name="Berry K.J."/>
            <person name="Utterback T.R."/>
            <person name="Van Aken S.E."/>
            <person name="Feldblyum T.V."/>
            <person name="D'Ascenzo M."/>
            <person name="Deng W.-L."/>
            <person name="Ramos A.R."/>
            <person name="Alfano J.R."/>
            <person name="Cartinhour S."/>
            <person name="Chatterjee A.K."/>
            <person name="Delaney T.P."/>
            <person name="Lazarowitz S.G."/>
            <person name="Martin G.B."/>
            <person name="Schneider D.J."/>
            <person name="Tang X."/>
            <person name="Bender C.L."/>
            <person name="White O."/>
            <person name="Fraser C.M."/>
            <person name="Collmer A."/>
        </authorList>
    </citation>
    <scope>NUCLEOTIDE SEQUENCE [LARGE SCALE GENOMIC DNA]</scope>
    <source>
        <strain>ATCC BAA-871 / DC3000</strain>
    </source>
</reference>
<comment type="function">
    <text evidence="1">Component of the acetyl coenzyme A carboxylase (ACC) complex. First, biotin carboxylase catalyzes the carboxylation of biotin on its carrier protein (BCCP) and then the CO(2) group is transferred by the carboxyltransferase to acetyl-CoA to form malonyl-CoA.</text>
</comment>
<comment type="catalytic activity">
    <reaction evidence="1">
        <text>N(6)-carboxybiotinyl-L-lysyl-[protein] + acetyl-CoA = N(6)-biotinyl-L-lysyl-[protein] + malonyl-CoA</text>
        <dbReference type="Rhea" id="RHEA:54728"/>
        <dbReference type="Rhea" id="RHEA-COMP:10505"/>
        <dbReference type="Rhea" id="RHEA-COMP:10506"/>
        <dbReference type="ChEBI" id="CHEBI:57288"/>
        <dbReference type="ChEBI" id="CHEBI:57384"/>
        <dbReference type="ChEBI" id="CHEBI:83144"/>
        <dbReference type="ChEBI" id="CHEBI:83145"/>
        <dbReference type="EC" id="2.1.3.15"/>
    </reaction>
</comment>
<comment type="pathway">
    <text evidence="1">Lipid metabolism; malonyl-CoA biosynthesis; malonyl-CoA from acetyl-CoA: step 1/1.</text>
</comment>
<comment type="subunit">
    <text evidence="1">Acetyl-CoA carboxylase is a heterohexamer composed of biotin carboxyl carrier protein (AccB), biotin carboxylase (AccC) and two subunits each of ACCase subunit alpha (AccA) and ACCase subunit beta (AccD).</text>
</comment>
<comment type="subcellular location">
    <subcellularLocation>
        <location evidence="1">Cytoplasm</location>
    </subcellularLocation>
</comment>
<comment type="similarity">
    <text evidence="1">Belongs to the AccA family.</text>
</comment>
<name>ACCA_PSESM</name>
<dbReference type="EC" id="2.1.3.15" evidence="1"/>
<dbReference type="EMBL" id="AE016853">
    <property type="protein sequence ID" value="AAO55070.1"/>
    <property type="molecule type" value="Genomic_DNA"/>
</dbReference>
<dbReference type="RefSeq" id="NP_791375.1">
    <property type="nucleotide sequence ID" value="NC_004578.1"/>
</dbReference>
<dbReference type="RefSeq" id="WP_003377825.1">
    <property type="nucleotide sequence ID" value="NC_004578.1"/>
</dbReference>
<dbReference type="SMR" id="Q886M7"/>
<dbReference type="STRING" id="223283.PSPTO_1550"/>
<dbReference type="GeneID" id="61791886"/>
<dbReference type="KEGG" id="pst:PSPTO_1550"/>
<dbReference type="PATRIC" id="fig|223283.9.peg.1576"/>
<dbReference type="eggNOG" id="COG0825">
    <property type="taxonomic scope" value="Bacteria"/>
</dbReference>
<dbReference type="HOGENOM" id="CLU_015486_0_2_6"/>
<dbReference type="OrthoDB" id="9808023at2"/>
<dbReference type="PhylomeDB" id="Q886M7"/>
<dbReference type="UniPathway" id="UPA00655">
    <property type="reaction ID" value="UER00711"/>
</dbReference>
<dbReference type="Proteomes" id="UP000002515">
    <property type="component" value="Chromosome"/>
</dbReference>
<dbReference type="GO" id="GO:0009317">
    <property type="term" value="C:acetyl-CoA carboxylase complex"/>
    <property type="evidence" value="ECO:0007669"/>
    <property type="project" value="InterPro"/>
</dbReference>
<dbReference type="GO" id="GO:0003989">
    <property type="term" value="F:acetyl-CoA carboxylase activity"/>
    <property type="evidence" value="ECO:0007669"/>
    <property type="project" value="InterPro"/>
</dbReference>
<dbReference type="GO" id="GO:0005524">
    <property type="term" value="F:ATP binding"/>
    <property type="evidence" value="ECO:0007669"/>
    <property type="project" value="UniProtKB-KW"/>
</dbReference>
<dbReference type="GO" id="GO:0016743">
    <property type="term" value="F:carboxyl- or carbamoyltransferase activity"/>
    <property type="evidence" value="ECO:0007669"/>
    <property type="project" value="UniProtKB-UniRule"/>
</dbReference>
<dbReference type="GO" id="GO:0006633">
    <property type="term" value="P:fatty acid biosynthetic process"/>
    <property type="evidence" value="ECO:0007669"/>
    <property type="project" value="UniProtKB-KW"/>
</dbReference>
<dbReference type="GO" id="GO:2001295">
    <property type="term" value="P:malonyl-CoA biosynthetic process"/>
    <property type="evidence" value="ECO:0007669"/>
    <property type="project" value="UniProtKB-UniRule"/>
</dbReference>
<dbReference type="FunFam" id="3.90.226.10:FF:000008">
    <property type="entry name" value="Acetyl-coenzyme A carboxylase carboxyl transferase subunit alpha"/>
    <property type="match status" value="1"/>
</dbReference>
<dbReference type="Gene3D" id="3.90.226.10">
    <property type="entry name" value="2-enoyl-CoA Hydratase, Chain A, domain 1"/>
    <property type="match status" value="1"/>
</dbReference>
<dbReference type="HAMAP" id="MF_00823">
    <property type="entry name" value="AcetylCoA_CT_alpha"/>
    <property type="match status" value="1"/>
</dbReference>
<dbReference type="InterPro" id="IPR001095">
    <property type="entry name" value="Acetyl_CoA_COase_a_su"/>
</dbReference>
<dbReference type="InterPro" id="IPR029045">
    <property type="entry name" value="ClpP/crotonase-like_dom_sf"/>
</dbReference>
<dbReference type="InterPro" id="IPR011763">
    <property type="entry name" value="COA_CT_C"/>
</dbReference>
<dbReference type="NCBIfam" id="TIGR00513">
    <property type="entry name" value="accA"/>
    <property type="match status" value="1"/>
</dbReference>
<dbReference type="NCBIfam" id="NF041504">
    <property type="entry name" value="AccA_sub"/>
    <property type="match status" value="1"/>
</dbReference>
<dbReference type="NCBIfam" id="NF004344">
    <property type="entry name" value="PRK05724.1"/>
    <property type="match status" value="1"/>
</dbReference>
<dbReference type="PANTHER" id="PTHR42853">
    <property type="entry name" value="ACETYL-COENZYME A CARBOXYLASE CARBOXYL TRANSFERASE SUBUNIT ALPHA"/>
    <property type="match status" value="1"/>
</dbReference>
<dbReference type="PANTHER" id="PTHR42853:SF3">
    <property type="entry name" value="ACETYL-COENZYME A CARBOXYLASE CARBOXYL TRANSFERASE SUBUNIT ALPHA, CHLOROPLASTIC"/>
    <property type="match status" value="1"/>
</dbReference>
<dbReference type="Pfam" id="PF03255">
    <property type="entry name" value="ACCA"/>
    <property type="match status" value="1"/>
</dbReference>
<dbReference type="PRINTS" id="PR01069">
    <property type="entry name" value="ACCCTRFRASEA"/>
</dbReference>
<dbReference type="SUPFAM" id="SSF52096">
    <property type="entry name" value="ClpP/crotonase"/>
    <property type="match status" value="1"/>
</dbReference>
<dbReference type="PROSITE" id="PS50989">
    <property type="entry name" value="COA_CT_CTER"/>
    <property type="match status" value="1"/>
</dbReference>
<proteinExistence type="inferred from homology"/>
<protein>
    <recommendedName>
        <fullName evidence="1">Acetyl-coenzyme A carboxylase carboxyl transferase subunit alpha</fullName>
        <shortName evidence="1">ACCase subunit alpha</shortName>
        <shortName evidence="1">Acetyl-CoA carboxylase carboxyltransferase subunit alpha</shortName>
        <ecNumber evidence="1">2.1.3.15</ecNumber>
    </recommendedName>
</protein>